<feature type="chain" id="PRO_1000081794" description="Small ribosomal subunit protein uS19">
    <location>
        <begin position="1"/>
        <end position="92"/>
    </location>
</feature>
<organism>
    <name type="scientific">Shewanella pealeana (strain ATCC 700345 / ANG-SQ1)</name>
    <dbReference type="NCBI Taxonomy" id="398579"/>
    <lineage>
        <taxon>Bacteria</taxon>
        <taxon>Pseudomonadati</taxon>
        <taxon>Pseudomonadota</taxon>
        <taxon>Gammaproteobacteria</taxon>
        <taxon>Alteromonadales</taxon>
        <taxon>Shewanellaceae</taxon>
        <taxon>Shewanella</taxon>
    </lineage>
</organism>
<reference key="1">
    <citation type="submission" date="2007-10" db="EMBL/GenBank/DDBJ databases">
        <title>Complete sequence of Shewanella pealeana ATCC 700345.</title>
        <authorList>
            <consortium name="US DOE Joint Genome Institute"/>
            <person name="Copeland A."/>
            <person name="Lucas S."/>
            <person name="Lapidus A."/>
            <person name="Barry K."/>
            <person name="Glavina del Rio T."/>
            <person name="Dalin E."/>
            <person name="Tice H."/>
            <person name="Pitluck S."/>
            <person name="Chertkov O."/>
            <person name="Brettin T."/>
            <person name="Bruce D."/>
            <person name="Detter J.C."/>
            <person name="Han C."/>
            <person name="Schmutz J."/>
            <person name="Larimer F."/>
            <person name="Land M."/>
            <person name="Hauser L."/>
            <person name="Kyrpides N."/>
            <person name="Kim E."/>
            <person name="Zhao J.-S.Z."/>
            <person name="Manno D."/>
            <person name="Hawari J."/>
            <person name="Richardson P."/>
        </authorList>
    </citation>
    <scope>NUCLEOTIDE SEQUENCE [LARGE SCALE GENOMIC DNA]</scope>
    <source>
        <strain>ATCC 700345 / ANG-SQ1</strain>
    </source>
</reference>
<protein>
    <recommendedName>
        <fullName evidence="1">Small ribosomal subunit protein uS19</fullName>
    </recommendedName>
    <alternativeName>
        <fullName evidence="2">30S ribosomal protein S19</fullName>
    </alternativeName>
</protein>
<accession>A8GYY0</accession>
<comment type="function">
    <text evidence="1">Protein S19 forms a complex with S13 that binds strongly to the 16S ribosomal RNA.</text>
</comment>
<comment type="similarity">
    <text evidence="1">Belongs to the universal ribosomal protein uS19 family.</text>
</comment>
<evidence type="ECO:0000255" key="1">
    <source>
        <dbReference type="HAMAP-Rule" id="MF_00531"/>
    </source>
</evidence>
<evidence type="ECO:0000305" key="2"/>
<name>RS19_SHEPA</name>
<keyword id="KW-1185">Reference proteome</keyword>
<keyword id="KW-0687">Ribonucleoprotein</keyword>
<keyword id="KW-0689">Ribosomal protein</keyword>
<keyword id="KW-0694">RNA-binding</keyword>
<keyword id="KW-0699">rRNA-binding</keyword>
<gene>
    <name evidence="1" type="primary">rpsS</name>
    <name type="ordered locus">Spea_0188</name>
</gene>
<dbReference type="EMBL" id="CP000851">
    <property type="protein sequence ID" value="ABV85517.1"/>
    <property type="molecule type" value="Genomic_DNA"/>
</dbReference>
<dbReference type="RefSeq" id="WP_011863970.1">
    <property type="nucleotide sequence ID" value="NC_009901.1"/>
</dbReference>
<dbReference type="SMR" id="A8GYY0"/>
<dbReference type="STRING" id="398579.Spea_0188"/>
<dbReference type="KEGG" id="spl:Spea_0188"/>
<dbReference type="eggNOG" id="COG0185">
    <property type="taxonomic scope" value="Bacteria"/>
</dbReference>
<dbReference type="HOGENOM" id="CLU_144911_0_1_6"/>
<dbReference type="OrthoDB" id="9797833at2"/>
<dbReference type="Proteomes" id="UP000002608">
    <property type="component" value="Chromosome"/>
</dbReference>
<dbReference type="GO" id="GO:0005737">
    <property type="term" value="C:cytoplasm"/>
    <property type="evidence" value="ECO:0007669"/>
    <property type="project" value="UniProtKB-ARBA"/>
</dbReference>
<dbReference type="GO" id="GO:0015935">
    <property type="term" value="C:small ribosomal subunit"/>
    <property type="evidence" value="ECO:0007669"/>
    <property type="project" value="InterPro"/>
</dbReference>
<dbReference type="GO" id="GO:0019843">
    <property type="term" value="F:rRNA binding"/>
    <property type="evidence" value="ECO:0007669"/>
    <property type="project" value="UniProtKB-UniRule"/>
</dbReference>
<dbReference type="GO" id="GO:0003735">
    <property type="term" value="F:structural constituent of ribosome"/>
    <property type="evidence" value="ECO:0007669"/>
    <property type="project" value="InterPro"/>
</dbReference>
<dbReference type="GO" id="GO:0000028">
    <property type="term" value="P:ribosomal small subunit assembly"/>
    <property type="evidence" value="ECO:0007669"/>
    <property type="project" value="TreeGrafter"/>
</dbReference>
<dbReference type="GO" id="GO:0006412">
    <property type="term" value="P:translation"/>
    <property type="evidence" value="ECO:0007669"/>
    <property type="project" value="UniProtKB-UniRule"/>
</dbReference>
<dbReference type="FunFam" id="3.30.860.10:FF:000001">
    <property type="entry name" value="30S ribosomal protein S19"/>
    <property type="match status" value="1"/>
</dbReference>
<dbReference type="Gene3D" id="3.30.860.10">
    <property type="entry name" value="30s Ribosomal Protein S19, Chain A"/>
    <property type="match status" value="1"/>
</dbReference>
<dbReference type="HAMAP" id="MF_00531">
    <property type="entry name" value="Ribosomal_uS19"/>
    <property type="match status" value="1"/>
</dbReference>
<dbReference type="InterPro" id="IPR002222">
    <property type="entry name" value="Ribosomal_uS19"/>
</dbReference>
<dbReference type="InterPro" id="IPR005732">
    <property type="entry name" value="Ribosomal_uS19_bac-type"/>
</dbReference>
<dbReference type="InterPro" id="IPR020934">
    <property type="entry name" value="Ribosomal_uS19_CS"/>
</dbReference>
<dbReference type="InterPro" id="IPR023575">
    <property type="entry name" value="Ribosomal_uS19_SF"/>
</dbReference>
<dbReference type="NCBIfam" id="TIGR01050">
    <property type="entry name" value="rpsS_bact"/>
    <property type="match status" value="1"/>
</dbReference>
<dbReference type="PANTHER" id="PTHR11880">
    <property type="entry name" value="RIBOSOMAL PROTEIN S19P FAMILY MEMBER"/>
    <property type="match status" value="1"/>
</dbReference>
<dbReference type="PANTHER" id="PTHR11880:SF8">
    <property type="entry name" value="SMALL RIBOSOMAL SUBUNIT PROTEIN US19M"/>
    <property type="match status" value="1"/>
</dbReference>
<dbReference type="Pfam" id="PF00203">
    <property type="entry name" value="Ribosomal_S19"/>
    <property type="match status" value="1"/>
</dbReference>
<dbReference type="PIRSF" id="PIRSF002144">
    <property type="entry name" value="Ribosomal_S19"/>
    <property type="match status" value="1"/>
</dbReference>
<dbReference type="PRINTS" id="PR00975">
    <property type="entry name" value="RIBOSOMALS19"/>
</dbReference>
<dbReference type="SUPFAM" id="SSF54570">
    <property type="entry name" value="Ribosomal protein S19"/>
    <property type="match status" value="1"/>
</dbReference>
<dbReference type="PROSITE" id="PS00323">
    <property type="entry name" value="RIBOSOMAL_S19"/>
    <property type="match status" value="1"/>
</dbReference>
<sequence>MPRSLKKGPFIDLHLLKKVEKAMEAGDKKPIKTWSRRSMIIPNMIGMTIAVHNGRQHVPVFVTDEMIGHKLGEFSPTRTYRGHAADKKAKKR</sequence>
<proteinExistence type="inferred from homology"/>